<dbReference type="EC" id="3.6.5.3" evidence="2"/>
<dbReference type="EMBL" id="CP000359">
    <property type="protein sequence ID" value="ABF44948.1"/>
    <property type="molecule type" value="Genomic_DNA"/>
</dbReference>
<dbReference type="EMBL" id="CP000359">
    <property type="protein sequence ID" value="ABF46164.1"/>
    <property type="molecule type" value="Genomic_DNA"/>
</dbReference>
<dbReference type="SMR" id="Q1IX70"/>
<dbReference type="STRING" id="319795.Dgeo_0646"/>
<dbReference type="KEGG" id="dge:Dgeo_0646"/>
<dbReference type="KEGG" id="dge:Dgeo_1869"/>
<dbReference type="eggNOG" id="COG0050">
    <property type="taxonomic scope" value="Bacteria"/>
</dbReference>
<dbReference type="HOGENOM" id="CLU_007265_0_1_0"/>
<dbReference type="Proteomes" id="UP000002431">
    <property type="component" value="Chromosome"/>
</dbReference>
<dbReference type="GO" id="GO:0005829">
    <property type="term" value="C:cytosol"/>
    <property type="evidence" value="ECO:0007669"/>
    <property type="project" value="TreeGrafter"/>
</dbReference>
<dbReference type="GO" id="GO:0005525">
    <property type="term" value="F:GTP binding"/>
    <property type="evidence" value="ECO:0007669"/>
    <property type="project" value="UniProtKB-UniRule"/>
</dbReference>
<dbReference type="GO" id="GO:0003924">
    <property type="term" value="F:GTPase activity"/>
    <property type="evidence" value="ECO:0007669"/>
    <property type="project" value="InterPro"/>
</dbReference>
<dbReference type="GO" id="GO:0003746">
    <property type="term" value="F:translation elongation factor activity"/>
    <property type="evidence" value="ECO:0007669"/>
    <property type="project" value="UniProtKB-UniRule"/>
</dbReference>
<dbReference type="CDD" id="cd01884">
    <property type="entry name" value="EF_Tu"/>
    <property type="match status" value="1"/>
</dbReference>
<dbReference type="CDD" id="cd03697">
    <property type="entry name" value="EFTU_II"/>
    <property type="match status" value="1"/>
</dbReference>
<dbReference type="CDD" id="cd03707">
    <property type="entry name" value="EFTU_III"/>
    <property type="match status" value="1"/>
</dbReference>
<dbReference type="FunFam" id="2.40.30.10:FF:000001">
    <property type="entry name" value="Elongation factor Tu"/>
    <property type="match status" value="1"/>
</dbReference>
<dbReference type="FunFam" id="3.40.50.300:FF:000003">
    <property type="entry name" value="Elongation factor Tu"/>
    <property type="match status" value="1"/>
</dbReference>
<dbReference type="Gene3D" id="3.40.50.300">
    <property type="entry name" value="P-loop containing nucleotide triphosphate hydrolases"/>
    <property type="match status" value="1"/>
</dbReference>
<dbReference type="Gene3D" id="2.40.30.10">
    <property type="entry name" value="Translation factors"/>
    <property type="match status" value="2"/>
</dbReference>
<dbReference type="HAMAP" id="MF_00118_B">
    <property type="entry name" value="EF_Tu_B"/>
    <property type="match status" value="1"/>
</dbReference>
<dbReference type="InterPro" id="IPR041709">
    <property type="entry name" value="EF-Tu_GTP-bd"/>
</dbReference>
<dbReference type="InterPro" id="IPR050055">
    <property type="entry name" value="EF-Tu_GTPase"/>
</dbReference>
<dbReference type="InterPro" id="IPR004161">
    <property type="entry name" value="EFTu-like_2"/>
</dbReference>
<dbReference type="InterPro" id="IPR033720">
    <property type="entry name" value="EFTU_2"/>
</dbReference>
<dbReference type="InterPro" id="IPR031157">
    <property type="entry name" value="G_TR_CS"/>
</dbReference>
<dbReference type="InterPro" id="IPR027417">
    <property type="entry name" value="P-loop_NTPase"/>
</dbReference>
<dbReference type="InterPro" id="IPR005225">
    <property type="entry name" value="Small_GTP-bd"/>
</dbReference>
<dbReference type="InterPro" id="IPR000795">
    <property type="entry name" value="T_Tr_GTP-bd_dom"/>
</dbReference>
<dbReference type="InterPro" id="IPR009000">
    <property type="entry name" value="Transl_B-barrel_sf"/>
</dbReference>
<dbReference type="InterPro" id="IPR009001">
    <property type="entry name" value="Transl_elong_EF1A/Init_IF2_C"/>
</dbReference>
<dbReference type="InterPro" id="IPR004541">
    <property type="entry name" value="Transl_elong_EFTu/EF1A_bac/org"/>
</dbReference>
<dbReference type="InterPro" id="IPR004160">
    <property type="entry name" value="Transl_elong_EFTu/EF1A_C"/>
</dbReference>
<dbReference type="NCBIfam" id="TIGR00485">
    <property type="entry name" value="EF-Tu"/>
    <property type="match status" value="1"/>
</dbReference>
<dbReference type="NCBIfam" id="NF000766">
    <property type="entry name" value="PRK00049.1"/>
    <property type="match status" value="1"/>
</dbReference>
<dbReference type="NCBIfam" id="NF009372">
    <property type="entry name" value="PRK12735.1"/>
    <property type="match status" value="1"/>
</dbReference>
<dbReference type="NCBIfam" id="NF009373">
    <property type="entry name" value="PRK12736.1"/>
    <property type="match status" value="1"/>
</dbReference>
<dbReference type="NCBIfam" id="TIGR00231">
    <property type="entry name" value="small_GTP"/>
    <property type="match status" value="1"/>
</dbReference>
<dbReference type="PANTHER" id="PTHR43721:SF22">
    <property type="entry name" value="ELONGATION FACTOR TU, MITOCHONDRIAL"/>
    <property type="match status" value="1"/>
</dbReference>
<dbReference type="PANTHER" id="PTHR43721">
    <property type="entry name" value="ELONGATION FACTOR TU-RELATED"/>
    <property type="match status" value="1"/>
</dbReference>
<dbReference type="Pfam" id="PF00009">
    <property type="entry name" value="GTP_EFTU"/>
    <property type="match status" value="1"/>
</dbReference>
<dbReference type="Pfam" id="PF03144">
    <property type="entry name" value="GTP_EFTU_D2"/>
    <property type="match status" value="1"/>
</dbReference>
<dbReference type="Pfam" id="PF03143">
    <property type="entry name" value="GTP_EFTU_D3"/>
    <property type="match status" value="1"/>
</dbReference>
<dbReference type="PRINTS" id="PR00315">
    <property type="entry name" value="ELONGATNFCT"/>
</dbReference>
<dbReference type="SUPFAM" id="SSF50465">
    <property type="entry name" value="EF-Tu/eEF-1alpha/eIF2-gamma C-terminal domain"/>
    <property type="match status" value="1"/>
</dbReference>
<dbReference type="SUPFAM" id="SSF52540">
    <property type="entry name" value="P-loop containing nucleoside triphosphate hydrolases"/>
    <property type="match status" value="1"/>
</dbReference>
<dbReference type="SUPFAM" id="SSF50447">
    <property type="entry name" value="Translation proteins"/>
    <property type="match status" value="1"/>
</dbReference>
<dbReference type="PROSITE" id="PS00301">
    <property type="entry name" value="G_TR_1"/>
    <property type="match status" value="1"/>
</dbReference>
<dbReference type="PROSITE" id="PS51722">
    <property type="entry name" value="G_TR_2"/>
    <property type="match status" value="1"/>
</dbReference>
<feature type="chain" id="PRO_0000337370" description="Elongation factor Tu">
    <location>
        <begin position="1"/>
        <end position="405"/>
    </location>
</feature>
<feature type="domain" description="tr-type G">
    <location>
        <begin position="10"/>
        <end position="215"/>
    </location>
</feature>
<feature type="region of interest" description="G1" evidence="1">
    <location>
        <begin position="19"/>
        <end position="26"/>
    </location>
</feature>
<feature type="region of interest" description="G2" evidence="1">
    <location>
        <begin position="61"/>
        <end position="65"/>
    </location>
</feature>
<feature type="region of interest" description="G3" evidence="1">
    <location>
        <begin position="82"/>
        <end position="85"/>
    </location>
</feature>
<feature type="region of interest" description="G4" evidence="1">
    <location>
        <begin position="137"/>
        <end position="140"/>
    </location>
</feature>
<feature type="region of interest" description="G5" evidence="1">
    <location>
        <begin position="175"/>
        <end position="177"/>
    </location>
</feature>
<feature type="binding site" evidence="2">
    <location>
        <begin position="19"/>
        <end position="26"/>
    </location>
    <ligand>
        <name>GTP</name>
        <dbReference type="ChEBI" id="CHEBI:37565"/>
    </ligand>
</feature>
<feature type="binding site" evidence="2">
    <location>
        <position position="26"/>
    </location>
    <ligand>
        <name>Mg(2+)</name>
        <dbReference type="ChEBI" id="CHEBI:18420"/>
    </ligand>
</feature>
<feature type="binding site" evidence="2">
    <location>
        <begin position="82"/>
        <end position="86"/>
    </location>
    <ligand>
        <name>GTP</name>
        <dbReference type="ChEBI" id="CHEBI:37565"/>
    </ligand>
</feature>
<feature type="binding site" evidence="2">
    <location>
        <begin position="137"/>
        <end position="140"/>
    </location>
    <ligand>
        <name>GTP</name>
        <dbReference type="ChEBI" id="CHEBI:37565"/>
    </ligand>
</feature>
<protein>
    <recommendedName>
        <fullName evidence="2">Elongation factor Tu</fullName>
        <shortName evidence="2">EF-Tu</shortName>
        <ecNumber evidence="2">3.6.5.3</ecNumber>
    </recommendedName>
</protein>
<accession>Q1IX70</accession>
<proteinExistence type="inferred from homology"/>
<gene>
    <name evidence="2" type="primary">tuf1</name>
    <name type="ordered locus">Dgeo_0646</name>
</gene>
<gene>
    <name evidence="2" type="primary">tuf2</name>
    <name type="ordered locus">Dgeo_1869</name>
</gene>
<evidence type="ECO:0000250" key="1"/>
<evidence type="ECO:0000255" key="2">
    <source>
        <dbReference type="HAMAP-Rule" id="MF_00118"/>
    </source>
</evidence>
<keyword id="KW-0963">Cytoplasm</keyword>
<keyword id="KW-0251">Elongation factor</keyword>
<keyword id="KW-0342">GTP-binding</keyword>
<keyword id="KW-0378">Hydrolase</keyword>
<keyword id="KW-0460">Magnesium</keyword>
<keyword id="KW-0479">Metal-binding</keyword>
<keyword id="KW-0547">Nucleotide-binding</keyword>
<keyword id="KW-0648">Protein biosynthesis</keyword>
<sequence>MAKGTFERTKPHVNVGTIGHVDHGKTTLTAAITFTAAAMDPTVEKLAYDQIDKAPEEKARGITINTAHVEYNTPARHYSHVDCPGHADYVKNMITGAAQMDGAILVVSSADGPMPQTREHILLARQVGVPYIVVFMNKVDMVDDEELLELVEMEVRELLSKYEFPGDDLPVIKGSALQALEALQQNPKTARGENPWVDKIWELLDAIDAYIPTPERATDKTFLMPVEDVFTITGRGTVATGRVERGVCKVGDEVEIVGLRDTKKTTITGVEMHRKLLDQGMAGDNVGVLLRGVARDDVERGQVLAKPGSITPHTKFEASVYVLSKDEGGRHSAFFGGYRPQFYFRTTDVTGVVELPAGVEMVMPGDNVSFTVELIKPIAMEEGLRFAIREGGRTVGAGVVTKVLE</sequence>
<organism>
    <name type="scientific">Deinococcus geothermalis (strain DSM 11300 / CIP 105573 / AG-3a)</name>
    <dbReference type="NCBI Taxonomy" id="319795"/>
    <lineage>
        <taxon>Bacteria</taxon>
        <taxon>Thermotogati</taxon>
        <taxon>Deinococcota</taxon>
        <taxon>Deinococci</taxon>
        <taxon>Deinococcales</taxon>
        <taxon>Deinococcaceae</taxon>
        <taxon>Deinococcus</taxon>
    </lineage>
</organism>
<comment type="function">
    <text evidence="2">GTP hydrolase that promotes the GTP-dependent binding of aminoacyl-tRNA to the A-site of ribosomes during protein biosynthesis.</text>
</comment>
<comment type="catalytic activity">
    <reaction evidence="2">
        <text>GTP + H2O = GDP + phosphate + H(+)</text>
        <dbReference type="Rhea" id="RHEA:19669"/>
        <dbReference type="ChEBI" id="CHEBI:15377"/>
        <dbReference type="ChEBI" id="CHEBI:15378"/>
        <dbReference type="ChEBI" id="CHEBI:37565"/>
        <dbReference type="ChEBI" id="CHEBI:43474"/>
        <dbReference type="ChEBI" id="CHEBI:58189"/>
        <dbReference type="EC" id="3.6.5.3"/>
    </reaction>
    <physiologicalReaction direction="left-to-right" evidence="2">
        <dbReference type="Rhea" id="RHEA:19670"/>
    </physiologicalReaction>
</comment>
<comment type="subunit">
    <text evidence="2">Monomer.</text>
</comment>
<comment type="subcellular location">
    <subcellularLocation>
        <location evidence="2">Cytoplasm</location>
    </subcellularLocation>
</comment>
<comment type="similarity">
    <text evidence="2">Belongs to the TRAFAC class translation factor GTPase superfamily. Classic translation factor GTPase family. EF-Tu/EF-1A subfamily.</text>
</comment>
<name>EFTU_DEIGD</name>
<reference key="1">
    <citation type="submission" date="2006-04" db="EMBL/GenBank/DDBJ databases">
        <title>Complete sequence of chromosome of Deinococcus geothermalis DSM 11300.</title>
        <authorList>
            <person name="Copeland A."/>
            <person name="Lucas S."/>
            <person name="Lapidus A."/>
            <person name="Barry K."/>
            <person name="Detter J.C."/>
            <person name="Glavina del Rio T."/>
            <person name="Hammon N."/>
            <person name="Israni S."/>
            <person name="Dalin E."/>
            <person name="Tice H."/>
            <person name="Pitluck S."/>
            <person name="Brettin T."/>
            <person name="Bruce D."/>
            <person name="Han C."/>
            <person name="Tapia R."/>
            <person name="Saunders E."/>
            <person name="Gilna P."/>
            <person name="Schmutz J."/>
            <person name="Larimer F."/>
            <person name="Land M."/>
            <person name="Hauser L."/>
            <person name="Kyrpides N."/>
            <person name="Kim E."/>
            <person name="Daly M.J."/>
            <person name="Fredrickson J.K."/>
            <person name="Makarova K.S."/>
            <person name="Gaidamakova E.K."/>
            <person name="Zhai M."/>
            <person name="Richardson P."/>
        </authorList>
    </citation>
    <scope>NUCLEOTIDE SEQUENCE [LARGE SCALE GENOMIC DNA]</scope>
    <source>
        <strain>DSM 11300 / CIP 105573 / AG-3a</strain>
    </source>
</reference>